<feature type="chain" id="PRO_1000004042" description="Small ribosomal subunit protein uS2">
    <location>
        <begin position="1"/>
        <end position="247"/>
    </location>
</feature>
<comment type="similarity">
    <text evidence="1">Belongs to the universal ribosomal protein uS2 family.</text>
</comment>
<gene>
    <name evidence="1" type="primary">rpsB</name>
    <name type="ordered locus">Rmet_1435</name>
</gene>
<name>RS2_CUPMC</name>
<evidence type="ECO:0000255" key="1">
    <source>
        <dbReference type="HAMAP-Rule" id="MF_00291"/>
    </source>
</evidence>
<evidence type="ECO:0000305" key="2"/>
<proteinExistence type="inferred from homology"/>
<dbReference type="EMBL" id="CP000352">
    <property type="protein sequence ID" value="ABF08318.1"/>
    <property type="molecule type" value="Genomic_DNA"/>
</dbReference>
<dbReference type="RefSeq" id="WP_008652266.1">
    <property type="nucleotide sequence ID" value="NC_007973.1"/>
</dbReference>
<dbReference type="SMR" id="Q1LNF8"/>
<dbReference type="STRING" id="266264.Rmet_1435"/>
<dbReference type="GeneID" id="60822192"/>
<dbReference type="KEGG" id="rme:Rmet_1435"/>
<dbReference type="eggNOG" id="COG0052">
    <property type="taxonomic scope" value="Bacteria"/>
</dbReference>
<dbReference type="HOGENOM" id="CLU_040318_1_2_4"/>
<dbReference type="Proteomes" id="UP000002429">
    <property type="component" value="Chromosome"/>
</dbReference>
<dbReference type="GO" id="GO:0022627">
    <property type="term" value="C:cytosolic small ribosomal subunit"/>
    <property type="evidence" value="ECO:0007669"/>
    <property type="project" value="TreeGrafter"/>
</dbReference>
<dbReference type="GO" id="GO:0003735">
    <property type="term" value="F:structural constituent of ribosome"/>
    <property type="evidence" value="ECO:0007669"/>
    <property type="project" value="InterPro"/>
</dbReference>
<dbReference type="GO" id="GO:0006412">
    <property type="term" value="P:translation"/>
    <property type="evidence" value="ECO:0007669"/>
    <property type="project" value="UniProtKB-UniRule"/>
</dbReference>
<dbReference type="CDD" id="cd01425">
    <property type="entry name" value="RPS2"/>
    <property type="match status" value="1"/>
</dbReference>
<dbReference type="FunFam" id="1.10.287.610:FF:000001">
    <property type="entry name" value="30S ribosomal protein S2"/>
    <property type="match status" value="1"/>
</dbReference>
<dbReference type="Gene3D" id="3.40.50.10490">
    <property type="entry name" value="Glucose-6-phosphate isomerase like protein, domain 1"/>
    <property type="match status" value="1"/>
</dbReference>
<dbReference type="Gene3D" id="1.10.287.610">
    <property type="entry name" value="Helix hairpin bin"/>
    <property type="match status" value="1"/>
</dbReference>
<dbReference type="HAMAP" id="MF_00291_B">
    <property type="entry name" value="Ribosomal_uS2_B"/>
    <property type="match status" value="1"/>
</dbReference>
<dbReference type="InterPro" id="IPR001865">
    <property type="entry name" value="Ribosomal_uS2"/>
</dbReference>
<dbReference type="InterPro" id="IPR005706">
    <property type="entry name" value="Ribosomal_uS2_bac/mit/plastid"/>
</dbReference>
<dbReference type="InterPro" id="IPR023591">
    <property type="entry name" value="Ribosomal_uS2_flav_dom_sf"/>
</dbReference>
<dbReference type="NCBIfam" id="TIGR01011">
    <property type="entry name" value="rpsB_bact"/>
    <property type="match status" value="1"/>
</dbReference>
<dbReference type="PANTHER" id="PTHR12534">
    <property type="entry name" value="30S RIBOSOMAL PROTEIN S2 PROKARYOTIC AND ORGANELLAR"/>
    <property type="match status" value="1"/>
</dbReference>
<dbReference type="PANTHER" id="PTHR12534:SF0">
    <property type="entry name" value="SMALL RIBOSOMAL SUBUNIT PROTEIN US2M"/>
    <property type="match status" value="1"/>
</dbReference>
<dbReference type="Pfam" id="PF00318">
    <property type="entry name" value="Ribosomal_S2"/>
    <property type="match status" value="1"/>
</dbReference>
<dbReference type="PRINTS" id="PR00395">
    <property type="entry name" value="RIBOSOMALS2"/>
</dbReference>
<dbReference type="SUPFAM" id="SSF52313">
    <property type="entry name" value="Ribosomal protein S2"/>
    <property type="match status" value="1"/>
</dbReference>
<protein>
    <recommendedName>
        <fullName evidence="1">Small ribosomal subunit protein uS2</fullName>
    </recommendedName>
    <alternativeName>
        <fullName evidence="2">30S ribosomal protein S2</fullName>
    </alternativeName>
</protein>
<sequence>MSVTMREMLEAGCHFGHQTRFWNPKMAPFIFGHRNKIHIINLEKTLPMFQDALKYVRQLAANRGTVLFVGTKRQSREILAEEAGRAGMPYVDARWLGGMLTNFKTVKISIKRLKDMEAAKEAGALETMSKKEALMFEREMEKLEKSIGGIKDMGGIPDAIFVVDVGYHKIAVTEANKLGIPVIGVVDTNHSPEGIDYVIPGNDDSSKAVALYVRGVADAILEGRANAVQEVVEAARGDDEFVEVQEG</sequence>
<keyword id="KW-1185">Reference proteome</keyword>
<keyword id="KW-0687">Ribonucleoprotein</keyword>
<keyword id="KW-0689">Ribosomal protein</keyword>
<organism>
    <name type="scientific">Cupriavidus metallidurans (strain ATCC 43123 / DSM 2839 / NBRC 102507 / CH34)</name>
    <name type="common">Ralstonia metallidurans</name>
    <dbReference type="NCBI Taxonomy" id="266264"/>
    <lineage>
        <taxon>Bacteria</taxon>
        <taxon>Pseudomonadati</taxon>
        <taxon>Pseudomonadota</taxon>
        <taxon>Betaproteobacteria</taxon>
        <taxon>Burkholderiales</taxon>
        <taxon>Burkholderiaceae</taxon>
        <taxon>Cupriavidus</taxon>
    </lineage>
</organism>
<accession>Q1LNF8</accession>
<reference key="1">
    <citation type="journal article" date="2010" name="PLoS ONE">
        <title>The complete genome sequence of Cupriavidus metallidurans strain CH34, a master survivalist in harsh and anthropogenic environments.</title>
        <authorList>
            <person name="Janssen P.J."/>
            <person name="Van Houdt R."/>
            <person name="Moors H."/>
            <person name="Monsieurs P."/>
            <person name="Morin N."/>
            <person name="Michaux A."/>
            <person name="Benotmane M.A."/>
            <person name="Leys N."/>
            <person name="Vallaeys T."/>
            <person name="Lapidus A."/>
            <person name="Monchy S."/>
            <person name="Medigue C."/>
            <person name="Taghavi S."/>
            <person name="McCorkle S."/>
            <person name="Dunn J."/>
            <person name="van der Lelie D."/>
            <person name="Mergeay M."/>
        </authorList>
    </citation>
    <scope>NUCLEOTIDE SEQUENCE [LARGE SCALE GENOMIC DNA]</scope>
    <source>
        <strain>ATCC 43123 / DSM 2839 / NBRC 102507 / CH34</strain>
    </source>
</reference>